<sequence length="292" mass="33991">MEGIPLIDIYGKQWKIDKLIGCGGFGCVYSTQCASNTRQAVIKVESLNNTTMVSEVLVYNNIYDKNRIALWKNYKNIDHLGIPMYYGCGSFKRNTMYYRFILLERLVENTKELLKRVKKPKPLIKNIMKDMLYTLEYIHEHGISHGDIKPENIMVDGRYRSYLIDYGIVSYFIVNGKHVKYYKESKNWHRGTLYYASLDAHNGTCVTRRGDLESLGYCMLKWAGIPLPWKVFGNNGNMVHVAKCDFIKRVHKNKVNIKSANKGIYDYIKCVTKLSYEEKPDYDLLRQLVNSL</sequence>
<evidence type="ECO:0000255" key="1">
    <source>
        <dbReference type="PROSITE-ProRule" id="PRU00159"/>
    </source>
</evidence>
<evidence type="ECO:0000255" key="2">
    <source>
        <dbReference type="PROSITE-ProRule" id="PRU10027"/>
    </source>
</evidence>
<gene>
    <name type="ordered locus">FPV226</name>
</gene>
<accession>Q9J509</accession>
<proteinExistence type="inferred from homology"/>
<feature type="chain" id="PRO_0000086788" description="Probable serine/threonine-protein kinase FPV226">
    <location>
        <begin position="1"/>
        <end position="292"/>
    </location>
</feature>
<feature type="domain" description="Protein kinase" evidence="1">
    <location>
        <begin position="14"/>
        <end position="292"/>
    </location>
</feature>
<feature type="active site" description="Proton acceptor" evidence="1 2">
    <location>
        <position position="147"/>
    </location>
</feature>
<feature type="binding site" evidence="1">
    <location>
        <begin position="20"/>
        <end position="28"/>
    </location>
    <ligand>
        <name>ATP</name>
        <dbReference type="ChEBI" id="CHEBI:30616"/>
    </ligand>
</feature>
<feature type="binding site" evidence="1">
    <location>
        <position position="43"/>
    </location>
    <ligand>
        <name>ATP</name>
        <dbReference type="ChEBI" id="CHEBI:30616"/>
    </ligand>
</feature>
<organismHost>
    <name type="scientific">Vertebrata</name>
    <dbReference type="NCBI Taxonomy" id="7742"/>
</organismHost>
<dbReference type="EC" id="2.7.11.1"/>
<dbReference type="EMBL" id="AF198100">
    <property type="protein sequence ID" value="AAF44570.1"/>
    <property type="molecule type" value="Genomic_DNA"/>
</dbReference>
<dbReference type="RefSeq" id="NP_039189.1">
    <property type="nucleotide sequence ID" value="NC_002188.1"/>
</dbReference>
<dbReference type="SMR" id="Q9J509"/>
<dbReference type="GeneID" id="1486798"/>
<dbReference type="KEGG" id="vg:1486798"/>
<dbReference type="Proteomes" id="UP000008597">
    <property type="component" value="Segment"/>
</dbReference>
<dbReference type="GO" id="GO:0005524">
    <property type="term" value="F:ATP binding"/>
    <property type="evidence" value="ECO:0007669"/>
    <property type="project" value="UniProtKB-KW"/>
</dbReference>
<dbReference type="GO" id="GO:0106310">
    <property type="term" value="F:protein serine kinase activity"/>
    <property type="evidence" value="ECO:0007669"/>
    <property type="project" value="RHEA"/>
</dbReference>
<dbReference type="GO" id="GO:0004674">
    <property type="term" value="F:protein serine/threonine kinase activity"/>
    <property type="evidence" value="ECO:0007669"/>
    <property type="project" value="UniProtKB-KW"/>
</dbReference>
<dbReference type="Gene3D" id="1.10.510.10">
    <property type="entry name" value="Transferase(Phosphotransferase) domain 1"/>
    <property type="match status" value="1"/>
</dbReference>
<dbReference type="InterPro" id="IPR050235">
    <property type="entry name" value="CK1_Ser-Thr_kinase"/>
</dbReference>
<dbReference type="InterPro" id="IPR011009">
    <property type="entry name" value="Kinase-like_dom_sf"/>
</dbReference>
<dbReference type="InterPro" id="IPR000719">
    <property type="entry name" value="Prot_kinase_dom"/>
</dbReference>
<dbReference type="InterPro" id="IPR017441">
    <property type="entry name" value="Protein_kinase_ATP_BS"/>
</dbReference>
<dbReference type="InterPro" id="IPR008271">
    <property type="entry name" value="Ser/Thr_kinase_AS"/>
</dbReference>
<dbReference type="PANTHER" id="PTHR11909">
    <property type="entry name" value="CASEIN KINASE-RELATED"/>
    <property type="match status" value="1"/>
</dbReference>
<dbReference type="Pfam" id="PF00069">
    <property type="entry name" value="Pkinase"/>
    <property type="match status" value="1"/>
</dbReference>
<dbReference type="SMART" id="SM00220">
    <property type="entry name" value="S_TKc"/>
    <property type="match status" value="1"/>
</dbReference>
<dbReference type="SUPFAM" id="SSF56112">
    <property type="entry name" value="Protein kinase-like (PK-like)"/>
    <property type="match status" value="1"/>
</dbReference>
<dbReference type="PROSITE" id="PS00107">
    <property type="entry name" value="PROTEIN_KINASE_ATP"/>
    <property type="match status" value="1"/>
</dbReference>
<dbReference type="PROSITE" id="PS50011">
    <property type="entry name" value="PROTEIN_KINASE_DOM"/>
    <property type="match status" value="1"/>
</dbReference>
<dbReference type="PROSITE" id="PS00108">
    <property type="entry name" value="PROTEIN_KINASE_ST"/>
    <property type="match status" value="1"/>
</dbReference>
<organism>
    <name type="scientific">Fowlpox virus (strain NVSL)</name>
    <name type="common">FPV</name>
    <dbReference type="NCBI Taxonomy" id="928301"/>
    <lineage>
        <taxon>Viruses</taxon>
        <taxon>Varidnaviria</taxon>
        <taxon>Bamfordvirae</taxon>
        <taxon>Nucleocytoviricota</taxon>
        <taxon>Pokkesviricetes</taxon>
        <taxon>Chitovirales</taxon>
        <taxon>Poxviridae</taxon>
        <taxon>Chordopoxvirinae</taxon>
        <taxon>Avipoxvirus</taxon>
        <taxon>Fowlpox virus</taxon>
    </lineage>
</organism>
<comment type="catalytic activity">
    <reaction>
        <text>L-seryl-[protein] + ATP = O-phospho-L-seryl-[protein] + ADP + H(+)</text>
        <dbReference type="Rhea" id="RHEA:17989"/>
        <dbReference type="Rhea" id="RHEA-COMP:9863"/>
        <dbReference type="Rhea" id="RHEA-COMP:11604"/>
        <dbReference type="ChEBI" id="CHEBI:15378"/>
        <dbReference type="ChEBI" id="CHEBI:29999"/>
        <dbReference type="ChEBI" id="CHEBI:30616"/>
        <dbReference type="ChEBI" id="CHEBI:83421"/>
        <dbReference type="ChEBI" id="CHEBI:456216"/>
        <dbReference type="EC" id="2.7.11.1"/>
    </reaction>
</comment>
<comment type="catalytic activity">
    <reaction>
        <text>L-threonyl-[protein] + ATP = O-phospho-L-threonyl-[protein] + ADP + H(+)</text>
        <dbReference type="Rhea" id="RHEA:46608"/>
        <dbReference type="Rhea" id="RHEA-COMP:11060"/>
        <dbReference type="Rhea" id="RHEA-COMP:11605"/>
        <dbReference type="ChEBI" id="CHEBI:15378"/>
        <dbReference type="ChEBI" id="CHEBI:30013"/>
        <dbReference type="ChEBI" id="CHEBI:30616"/>
        <dbReference type="ChEBI" id="CHEBI:61977"/>
        <dbReference type="ChEBI" id="CHEBI:456216"/>
        <dbReference type="EC" id="2.7.11.1"/>
    </reaction>
</comment>
<comment type="similarity">
    <text evidence="1">Belongs to the protein kinase superfamily. Ser/Thr protein kinase family. Poxviruses subfamily.</text>
</comment>
<protein>
    <recommendedName>
        <fullName>Probable serine/threonine-protein kinase FPV226</fullName>
        <ecNumber>2.7.11.1</ecNumber>
    </recommendedName>
</protein>
<name>V226_FOWPN</name>
<reference key="1">
    <citation type="journal article" date="2000" name="J. Virol.">
        <title>The genome of fowlpox virus.</title>
        <authorList>
            <person name="Afonso C.L."/>
            <person name="Tulman E.R."/>
            <person name="Lu Z."/>
            <person name="Zsak L."/>
            <person name="Kutish G.F."/>
            <person name="Rock D.L."/>
        </authorList>
    </citation>
    <scope>NUCLEOTIDE SEQUENCE [LARGE SCALE GENOMIC DNA]</scope>
</reference>
<keyword id="KW-0067">ATP-binding</keyword>
<keyword id="KW-0418">Kinase</keyword>
<keyword id="KW-0547">Nucleotide-binding</keyword>
<keyword id="KW-1185">Reference proteome</keyword>
<keyword id="KW-0723">Serine/threonine-protein kinase</keyword>
<keyword id="KW-0808">Transferase</keyword>